<dbReference type="EC" id="2.7.7.6" evidence="1"/>
<dbReference type="EMBL" id="CP001150">
    <property type="protein sequence ID" value="ACL99897.1"/>
    <property type="molecule type" value="Genomic_DNA"/>
</dbReference>
<dbReference type="RefSeq" id="WP_002722536.1">
    <property type="nucleotide sequence ID" value="NC_011963.1"/>
</dbReference>
<dbReference type="SMR" id="B9KLB5"/>
<dbReference type="GeneID" id="67445524"/>
<dbReference type="KEGG" id="rsk:RSKD131_0038"/>
<dbReference type="HOGENOM" id="CLU_053084_0_1_5"/>
<dbReference type="GO" id="GO:0005737">
    <property type="term" value="C:cytoplasm"/>
    <property type="evidence" value="ECO:0007669"/>
    <property type="project" value="UniProtKB-ARBA"/>
</dbReference>
<dbReference type="GO" id="GO:0000428">
    <property type="term" value="C:DNA-directed RNA polymerase complex"/>
    <property type="evidence" value="ECO:0007669"/>
    <property type="project" value="UniProtKB-KW"/>
</dbReference>
<dbReference type="GO" id="GO:0003677">
    <property type="term" value="F:DNA binding"/>
    <property type="evidence" value="ECO:0007669"/>
    <property type="project" value="UniProtKB-UniRule"/>
</dbReference>
<dbReference type="GO" id="GO:0003899">
    <property type="term" value="F:DNA-directed RNA polymerase activity"/>
    <property type="evidence" value="ECO:0007669"/>
    <property type="project" value="UniProtKB-UniRule"/>
</dbReference>
<dbReference type="GO" id="GO:0046983">
    <property type="term" value="F:protein dimerization activity"/>
    <property type="evidence" value="ECO:0007669"/>
    <property type="project" value="InterPro"/>
</dbReference>
<dbReference type="GO" id="GO:0006351">
    <property type="term" value="P:DNA-templated transcription"/>
    <property type="evidence" value="ECO:0007669"/>
    <property type="project" value="UniProtKB-UniRule"/>
</dbReference>
<dbReference type="CDD" id="cd06928">
    <property type="entry name" value="RNAP_alpha_NTD"/>
    <property type="match status" value="1"/>
</dbReference>
<dbReference type="FunFam" id="1.10.150.20:FF:000001">
    <property type="entry name" value="DNA-directed RNA polymerase subunit alpha"/>
    <property type="match status" value="1"/>
</dbReference>
<dbReference type="FunFam" id="2.170.120.12:FF:000001">
    <property type="entry name" value="DNA-directed RNA polymerase subunit alpha"/>
    <property type="match status" value="1"/>
</dbReference>
<dbReference type="Gene3D" id="1.10.150.20">
    <property type="entry name" value="5' to 3' exonuclease, C-terminal subdomain"/>
    <property type="match status" value="1"/>
</dbReference>
<dbReference type="Gene3D" id="2.170.120.12">
    <property type="entry name" value="DNA-directed RNA polymerase, insert domain"/>
    <property type="match status" value="1"/>
</dbReference>
<dbReference type="Gene3D" id="3.30.1360.10">
    <property type="entry name" value="RNA polymerase, RBP11-like subunit"/>
    <property type="match status" value="1"/>
</dbReference>
<dbReference type="HAMAP" id="MF_00059">
    <property type="entry name" value="RNApol_bact_RpoA"/>
    <property type="match status" value="1"/>
</dbReference>
<dbReference type="InterPro" id="IPR011262">
    <property type="entry name" value="DNA-dir_RNA_pol_insert"/>
</dbReference>
<dbReference type="InterPro" id="IPR011263">
    <property type="entry name" value="DNA-dir_RNA_pol_RpoA/D/Rpb3"/>
</dbReference>
<dbReference type="InterPro" id="IPR011773">
    <property type="entry name" value="DNA-dir_RpoA"/>
</dbReference>
<dbReference type="InterPro" id="IPR036603">
    <property type="entry name" value="RBP11-like"/>
</dbReference>
<dbReference type="InterPro" id="IPR011260">
    <property type="entry name" value="RNAP_asu_C"/>
</dbReference>
<dbReference type="InterPro" id="IPR036643">
    <property type="entry name" value="RNApol_insert_sf"/>
</dbReference>
<dbReference type="NCBIfam" id="NF003513">
    <property type="entry name" value="PRK05182.1-2"/>
    <property type="match status" value="1"/>
</dbReference>
<dbReference type="NCBIfam" id="NF003519">
    <property type="entry name" value="PRK05182.2-5"/>
    <property type="match status" value="1"/>
</dbReference>
<dbReference type="NCBIfam" id="TIGR02027">
    <property type="entry name" value="rpoA"/>
    <property type="match status" value="1"/>
</dbReference>
<dbReference type="Pfam" id="PF01000">
    <property type="entry name" value="RNA_pol_A_bac"/>
    <property type="match status" value="1"/>
</dbReference>
<dbReference type="Pfam" id="PF03118">
    <property type="entry name" value="RNA_pol_A_CTD"/>
    <property type="match status" value="1"/>
</dbReference>
<dbReference type="Pfam" id="PF01193">
    <property type="entry name" value="RNA_pol_L"/>
    <property type="match status" value="1"/>
</dbReference>
<dbReference type="SMART" id="SM00662">
    <property type="entry name" value="RPOLD"/>
    <property type="match status" value="1"/>
</dbReference>
<dbReference type="SUPFAM" id="SSF47789">
    <property type="entry name" value="C-terminal domain of RNA polymerase alpha subunit"/>
    <property type="match status" value="1"/>
</dbReference>
<dbReference type="SUPFAM" id="SSF56553">
    <property type="entry name" value="Insert subdomain of RNA polymerase alpha subunit"/>
    <property type="match status" value="1"/>
</dbReference>
<dbReference type="SUPFAM" id="SSF55257">
    <property type="entry name" value="RBP11-like subunits of RNA polymerase"/>
    <property type="match status" value="1"/>
</dbReference>
<gene>
    <name evidence="1" type="primary">rpoA</name>
    <name type="ordered locus">RSKD131_0038</name>
</gene>
<proteinExistence type="inferred from homology"/>
<feature type="chain" id="PRO_1000196647" description="DNA-directed RNA polymerase subunit alpha">
    <location>
        <begin position="1"/>
        <end position="338"/>
    </location>
</feature>
<feature type="region of interest" description="Alpha N-terminal domain (alpha-NTD)" evidence="1">
    <location>
        <begin position="1"/>
        <end position="234"/>
    </location>
</feature>
<feature type="region of interest" description="Alpha C-terminal domain (alpha-CTD)" evidence="1">
    <location>
        <begin position="250"/>
        <end position="338"/>
    </location>
</feature>
<protein>
    <recommendedName>
        <fullName evidence="1">DNA-directed RNA polymerase subunit alpha</fullName>
        <shortName evidence="1">RNAP subunit alpha</shortName>
        <ecNumber evidence="1">2.7.7.6</ecNumber>
    </recommendedName>
    <alternativeName>
        <fullName evidence="1">RNA polymerase subunit alpha</fullName>
    </alternativeName>
    <alternativeName>
        <fullName evidence="1">Transcriptase subunit alpha</fullName>
    </alternativeName>
</protein>
<keyword id="KW-0240">DNA-directed RNA polymerase</keyword>
<keyword id="KW-0548">Nucleotidyltransferase</keyword>
<keyword id="KW-0804">Transcription</keyword>
<keyword id="KW-0808">Transferase</keyword>
<sequence>MIHKNWAELIKPTQLVVKPGADPARVATVIAEPLERGFGLTLGNALRRVLLSSLQGAAITSVQIDNVLHEFSSVAGVREDVTDIVLNLKGVSIKMEVEGPKRLSISAKGPGVVTAGDISESNGIEILNKDHVICHLDEGADVFMELTVNTGKGYVAADKNRPEDAPIGLIPIDAIYSPVKKVSYEVTPTREGQVLDYDKLTMRIETDGGLTPDDAVAYAARILQDQLSIFVNFEEPESATRHDVEDGLEFNPLLLKKVDELELSVRSANCLKNDNIVYIGDLIQKTEAEMLRTPNFGRKSLNEIKEVLSGMGLHLGMDVEDWPPENIEDLAKRFEDQF</sequence>
<reference key="1">
    <citation type="journal article" date="2009" name="J. Bacteriol.">
        <title>Complete genome sequence of Rhodobacter sphaeroides KD131.</title>
        <authorList>
            <person name="Lim S.-K."/>
            <person name="Kim S.J."/>
            <person name="Cha S.H."/>
            <person name="Oh Y.-K."/>
            <person name="Rhee H.-J."/>
            <person name="Kim M.-S."/>
            <person name="Lee J.K."/>
        </authorList>
    </citation>
    <scope>NUCLEOTIDE SEQUENCE [LARGE SCALE GENOMIC DNA]</scope>
    <source>
        <strain>KD131 / KCTC 12085</strain>
    </source>
</reference>
<accession>B9KLB5</accession>
<comment type="function">
    <text evidence="1">DNA-dependent RNA polymerase catalyzes the transcription of DNA into RNA using the four ribonucleoside triphosphates as substrates.</text>
</comment>
<comment type="catalytic activity">
    <reaction evidence="1">
        <text>RNA(n) + a ribonucleoside 5'-triphosphate = RNA(n+1) + diphosphate</text>
        <dbReference type="Rhea" id="RHEA:21248"/>
        <dbReference type="Rhea" id="RHEA-COMP:14527"/>
        <dbReference type="Rhea" id="RHEA-COMP:17342"/>
        <dbReference type="ChEBI" id="CHEBI:33019"/>
        <dbReference type="ChEBI" id="CHEBI:61557"/>
        <dbReference type="ChEBI" id="CHEBI:140395"/>
        <dbReference type="EC" id="2.7.7.6"/>
    </reaction>
</comment>
<comment type="subunit">
    <text evidence="1">Homodimer. The RNAP catalytic core consists of 2 alpha, 1 beta, 1 beta' and 1 omega subunit. When a sigma factor is associated with the core the holoenzyme is formed, which can initiate transcription.</text>
</comment>
<comment type="domain">
    <text evidence="1">The N-terminal domain is essential for RNAP assembly and basal transcription, whereas the C-terminal domain is involved in interaction with transcriptional regulators and with upstream promoter elements.</text>
</comment>
<comment type="similarity">
    <text evidence="1">Belongs to the RNA polymerase alpha chain family.</text>
</comment>
<evidence type="ECO:0000255" key="1">
    <source>
        <dbReference type="HAMAP-Rule" id="MF_00059"/>
    </source>
</evidence>
<organism>
    <name type="scientific">Cereibacter sphaeroides (strain KD131 / KCTC 12085)</name>
    <name type="common">Rhodobacter sphaeroides</name>
    <dbReference type="NCBI Taxonomy" id="557760"/>
    <lineage>
        <taxon>Bacteria</taxon>
        <taxon>Pseudomonadati</taxon>
        <taxon>Pseudomonadota</taxon>
        <taxon>Alphaproteobacteria</taxon>
        <taxon>Rhodobacterales</taxon>
        <taxon>Paracoccaceae</taxon>
        <taxon>Cereibacter</taxon>
    </lineage>
</organism>
<name>RPOA_CERSK</name>